<organism>
    <name type="scientific">Lachancea thermotolerans (strain ATCC 56472 / CBS 6340 / NRRL Y-8284)</name>
    <name type="common">Yeast</name>
    <name type="synonym">Kluyveromyces thermotolerans</name>
    <dbReference type="NCBI Taxonomy" id="559295"/>
    <lineage>
        <taxon>Eukaryota</taxon>
        <taxon>Fungi</taxon>
        <taxon>Dikarya</taxon>
        <taxon>Ascomycota</taxon>
        <taxon>Saccharomycotina</taxon>
        <taxon>Saccharomycetes</taxon>
        <taxon>Saccharomycetales</taxon>
        <taxon>Saccharomycetaceae</taxon>
        <taxon>Lachancea</taxon>
    </lineage>
</organism>
<feature type="chain" id="PRO_0000409158" description="Monopolar spindle protein 2">
    <location>
        <begin position="1"/>
        <end position="386"/>
    </location>
</feature>
<feature type="transmembrane region" description="Helical" evidence="2">
    <location>
        <begin position="296"/>
        <end position="315"/>
    </location>
</feature>
<feature type="coiled-coil region" evidence="2">
    <location>
        <begin position="117"/>
        <end position="232"/>
    </location>
</feature>
<protein>
    <recommendedName>
        <fullName>Monopolar spindle protein 2</fullName>
    </recommendedName>
</protein>
<keyword id="KW-0175">Coiled coil</keyword>
<keyword id="KW-0963">Cytoplasm</keyword>
<keyword id="KW-0206">Cytoskeleton</keyword>
<keyword id="KW-0472">Membrane</keyword>
<keyword id="KW-0539">Nucleus</keyword>
<keyword id="KW-1185">Reference proteome</keyword>
<keyword id="KW-0812">Transmembrane</keyword>
<keyword id="KW-1133">Transmembrane helix</keyword>
<gene>
    <name type="primary">MPS2</name>
    <name type="ordered locus">KLTH0H04312g</name>
</gene>
<evidence type="ECO:0000250" key="1"/>
<evidence type="ECO:0000255" key="2"/>
<evidence type="ECO:0000305" key="3"/>
<proteinExistence type="inferred from homology"/>
<reference key="1">
    <citation type="journal article" date="2009" name="Genome Res.">
        <title>Comparative genomics of protoploid Saccharomycetaceae.</title>
        <authorList>
            <consortium name="The Genolevures Consortium"/>
            <person name="Souciet J.-L."/>
            <person name="Dujon B."/>
            <person name="Gaillardin C."/>
            <person name="Johnston M."/>
            <person name="Baret P.V."/>
            <person name="Cliften P."/>
            <person name="Sherman D.J."/>
            <person name="Weissenbach J."/>
            <person name="Westhof E."/>
            <person name="Wincker P."/>
            <person name="Jubin C."/>
            <person name="Poulain J."/>
            <person name="Barbe V."/>
            <person name="Segurens B."/>
            <person name="Artiguenave F."/>
            <person name="Anthouard V."/>
            <person name="Vacherie B."/>
            <person name="Val M.-E."/>
            <person name="Fulton R.S."/>
            <person name="Minx P."/>
            <person name="Wilson R."/>
            <person name="Durrens P."/>
            <person name="Jean G."/>
            <person name="Marck C."/>
            <person name="Martin T."/>
            <person name="Nikolski M."/>
            <person name="Rolland T."/>
            <person name="Seret M.-L."/>
            <person name="Casaregola S."/>
            <person name="Despons L."/>
            <person name="Fairhead C."/>
            <person name="Fischer G."/>
            <person name="Lafontaine I."/>
            <person name="Leh V."/>
            <person name="Lemaire M."/>
            <person name="de Montigny J."/>
            <person name="Neuveglise C."/>
            <person name="Thierry A."/>
            <person name="Blanc-Lenfle I."/>
            <person name="Bleykasten C."/>
            <person name="Diffels J."/>
            <person name="Fritsch E."/>
            <person name="Frangeul L."/>
            <person name="Goeffon A."/>
            <person name="Jauniaux N."/>
            <person name="Kachouri-Lafond R."/>
            <person name="Payen C."/>
            <person name="Potier S."/>
            <person name="Pribylova L."/>
            <person name="Ozanne C."/>
            <person name="Richard G.-F."/>
            <person name="Sacerdot C."/>
            <person name="Straub M.-L."/>
            <person name="Talla E."/>
        </authorList>
    </citation>
    <scope>NUCLEOTIDE SEQUENCE [LARGE SCALE GENOMIC DNA]</scope>
    <source>
        <strain>ATCC 56472 / CBS 6340 / NRRL Y-8284</strain>
    </source>
</reference>
<comment type="function">
    <text evidence="1">Component of the spindle pole body (SPB) required for insertion of the nascent SPB into the nuclear envelope and for the proper execution of spindle pole body (SPB) duplication.</text>
</comment>
<comment type="subcellular location">
    <subcellularLocation>
        <location evidence="1">Nucleus membrane</location>
        <topology evidence="1">Single-pass membrane protein</topology>
    </subcellularLocation>
    <subcellularLocation>
        <location evidence="1">Cytoplasm</location>
        <location evidence="1">Cytoskeleton</location>
        <location evidence="1">Microtubule organizing center</location>
        <location evidence="1">Spindle pole body</location>
    </subcellularLocation>
</comment>
<comment type="similarity">
    <text evidence="3">Belongs to the MPS2 family.</text>
</comment>
<accession>C5E2E7</accession>
<name>MPS2_LACTC</name>
<dbReference type="EMBL" id="CU928180">
    <property type="protein sequence ID" value="CAR30208.1"/>
    <property type="molecule type" value="Genomic_DNA"/>
</dbReference>
<dbReference type="RefSeq" id="XP_002556070.1">
    <property type="nucleotide sequence ID" value="XM_002556024.1"/>
</dbReference>
<dbReference type="SMR" id="C5E2E7"/>
<dbReference type="FunCoup" id="C5E2E7">
    <property type="interactions" value="164"/>
</dbReference>
<dbReference type="STRING" id="559295.C5E2E7"/>
<dbReference type="GeneID" id="8294383"/>
<dbReference type="KEGG" id="lth:KLTH0H04312g"/>
<dbReference type="eggNOG" id="ENOG502RYE7">
    <property type="taxonomic scope" value="Eukaryota"/>
</dbReference>
<dbReference type="HOGENOM" id="CLU_069890_0_0_1"/>
<dbReference type="InParanoid" id="C5E2E7"/>
<dbReference type="OMA" id="FIYAKDF"/>
<dbReference type="OrthoDB" id="4035046at2759"/>
<dbReference type="Proteomes" id="UP000002036">
    <property type="component" value="Chromosome H"/>
</dbReference>
<dbReference type="GO" id="GO:0005737">
    <property type="term" value="C:cytoplasm"/>
    <property type="evidence" value="ECO:0007669"/>
    <property type="project" value="UniProtKB-KW"/>
</dbReference>
<dbReference type="GO" id="GO:0031965">
    <property type="term" value="C:nuclear membrane"/>
    <property type="evidence" value="ECO:0007669"/>
    <property type="project" value="UniProtKB-SubCell"/>
</dbReference>
<dbReference type="GO" id="GO:0005816">
    <property type="term" value="C:spindle pole body"/>
    <property type="evidence" value="ECO:0007669"/>
    <property type="project" value="UniProtKB-SubCell"/>
</dbReference>
<dbReference type="GO" id="GO:0071988">
    <property type="term" value="P:protein localization to spindle pole body"/>
    <property type="evidence" value="ECO:0007669"/>
    <property type="project" value="InterPro"/>
</dbReference>
<dbReference type="GO" id="GO:0030474">
    <property type="term" value="P:spindle pole body duplication"/>
    <property type="evidence" value="ECO:0007669"/>
    <property type="project" value="InterPro"/>
</dbReference>
<dbReference type="InterPro" id="IPR031433">
    <property type="entry name" value="Mps2"/>
</dbReference>
<dbReference type="Pfam" id="PF17060">
    <property type="entry name" value="MPS2"/>
    <property type="match status" value="1"/>
</dbReference>
<sequence>MDTERHATLLLDLVWPEVDEKAQGFIYAKDFPLVVSRMEEILNRGKLERDRAQLVSETGREILRKFGSDQEFFKVYKEDFRELFDGLVGTSFKSAVKSCAGDGVLDRLQDSQAVDGIQDEKTSSHALQEEVMRLREQVRVLSSKNDEKDREITARDEIIADLQGKDASPAGSPRSLQRMRTLQARVTSLEDELSFRDEVIREKDRELLNLTKRVGEFKDKYQFLEREFQFYKGHREQKSPDSIKEATRHEFIISELRRKITEQSEIIGQMRMQVEAKPGALHPQGIGSTAGLPLNLPLRLVLRLIIGAILAYLAFDIGIRSLKAVGGLFGSSSPATLTPKSELSWWEQNTLLSKLLWFFKDLFDTYNLDAGRDEVVSANYDKLFGV</sequence>